<accession>Q8NZ29</accession>
<comment type="similarity">
    <text evidence="1">Belongs to the CinA family.</text>
</comment>
<gene>
    <name evidence="1" type="primary">cinA</name>
    <name type="ordered locus">spyM18_2175</name>
</gene>
<evidence type="ECO:0000255" key="1">
    <source>
        <dbReference type="HAMAP-Rule" id="MF_00226"/>
    </source>
</evidence>
<proteinExistence type="inferred from homology"/>
<dbReference type="EMBL" id="AE009949">
    <property type="protein sequence ID" value="AAL98619.1"/>
    <property type="molecule type" value="Genomic_DNA"/>
</dbReference>
<dbReference type="RefSeq" id="WP_011018313.1">
    <property type="nucleotide sequence ID" value="NC_003485.1"/>
</dbReference>
<dbReference type="SMR" id="Q8NZ29"/>
<dbReference type="KEGG" id="spm:spyM18_2175"/>
<dbReference type="HOGENOM" id="CLU_030805_9_3_9"/>
<dbReference type="CDD" id="cd00885">
    <property type="entry name" value="cinA"/>
    <property type="match status" value="1"/>
</dbReference>
<dbReference type="Gene3D" id="3.30.70.2860">
    <property type="match status" value="1"/>
</dbReference>
<dbReference type="Gene3D" id="3.90.950.20">
    <property type="entry name" value="CinA-like"/>
    <property type="match status" value="1"/>
</dbReference>
<dbReference type="Gene3D" id="3.40.980.10">
    <property type="entry name" value="MoaB/Mog-like domain"/>
    <property type="match status" value="1"/>
</dbReference>
<dbReference type="HAMAP" id="MF_00226_B">
    <property type="entry name" value="CinA_B"/>
    <property type="match status" value="1"/>
</dbReference>
<dbReference type="InterPro" id="IPR050101">
    <property type="entry name" value="CinA"/>
</dbReference>
<dbReference type="InterPro" id="IPR036653">
    <property type="entry name" value="CinA-like_C"/>
</dbReference>
<dbReference type="InterPro" id="IPR008136">
    <property type="entry name" value="CinA_C"/>
</dbReference>
<dbReference type="InterPro" id="IPR041424">
    <property type="entry name" value="CinA_KH"/>
</dbReference>
<dbReference type="InterPro" id="IPR008135">
    <property type="entry name" value="Competence-induced_CinA"/>
</dbReference>
<dbReference type="InterPro" id="IPR036425">
    <property type="entry name" value="MoaB/Mog-like_dom_sf"/>
</dbReference>
<dbReference type="InterPro" id="IPR001453">
    <property type="entry name" value="MoaB/Mog_dom"/>
</dbReference>
<dbReference type="NCBIfam" id="TIGR00200">
    <property type="entry name" value="cinA_nterm"/>
    <property type="match status" value="1"/>
</dbReference>
<dbReference type="NCBIfam" id="TIGR00177">
    <property type="entry name" value="molyb_syn"/>
    <property type="match status" value="1"/>
</dbReference>
<dbReference type="NCBIfam" id="TIGR00199">
    <property type="entry name" value="PncC_domain"/>
    <property type="match status" value="1"/>
</dbReference>
<dbReference type="NCBIfam" id="NF001813">
    <property type="entry name" value="PRK00549.1"/>
    <property type="match status" value="1"/>
</dbReference>
<dbReference type="PANTHER" id="PTHR13939">
    <property type="entry name" value="NICOTINAMIDE-NUCLEOTIDE AMIDOHYDROLASE PNCC"/>
    <property type="match status" value="1"/>
</dbReference>
<dbReference type="PANTHER" id="PTHR13939:SF0">
    <property type="entry name" value="NMN AMIDOHYDROLASE-LIKE PROTEIN YFAY"/>
    <property type="match status" value="1"/>
</dbReference>
<dbReference type="Pfam" id="PF02464">
    <property type="entry name" value="CinA"/>
    <property type="match status" value="1"/>
</dbReference>
<dbReference type="Pfam" id="PF18146">
    <property type="entry name" value="CinA_KH"/>
    <property type="match status" value="1"/>
</dbReference>
<dbReference type="Pfam" id="PF00994">
    <property type="entry name" value="MoCF_biosynth"/>
    <property type="match status" value="1"/>
</dbReference>
<dbReference type="PIRSF" id="PIRSF006728">
    <property type="entry name" value="CinA"/>
    <property type="match status" value="1"/>
</dbReference>
<dbReference type="SMART" id="SM00852">
    <property type="entry name" value="MoCF_biosynth"/>
    <property type="match status" value="1"/>
</dbReference>
<dbReference type="SUPFAM" id="SSF142433">
    <property type="entry name" value="CinA-like"/>
    <property type="match status" value="1"/>
</dbReference>
<dbReference type="SUPFAM" id="SSF53218">
    <property type="entry name" value="Molybdenum cofactor biosynthesis proteins"/>
    <property type="match status" value="1"/>
</dbReference>
<feature type="chain" id="PRO_0000156780" description="Putative competence-damage inducible protein">
    <location>
        <begin position="1"/>
        <end position="423"/>
    </location>
</feature>
<sequence length="423" mass="45909">MKAELIAVGTEILTGQIVNTNAQFLSEKMAELGIDVYFQTAVGDNEERLLSVITTASQRSDLVILCGGLGPTKDDLTKQTLAKYLRKDLVYDEQACQKLDDFFAKRKPSSRTPNNERQAQVIEGSIPLPNKTGLAVGGFITVDGISYVVLPGPPSELKSMVNEELVPLLSKQYSTLYSKVLRFFGVGESQLVTVLSDFIENQTDPTIAPYAKTGEVTLRLSTKTENQALADKKLGQLEAQLLSRKTLEGQPLADVFYGYGEDNSLARETFELLVKYDKTITAAESLTAGLFQSTLASFPGASQVFNGGFVAYSMEEKAKMLGLPLEELKSHGVVSAYTAEGMAEQARLLTGADIGVSLTGVAGPDMLEEQPAGTVFIGLATQNKVESIKVLISGQSRLDVRYIATLHAFNMVRKTLLKLENLL</sequence>
<name>CINA_STRP8</name>
<organism>
    <name type="scientific">Streptococcus pyogenes serotype M18 (strain MGAS8232)</name>
    <dbReference type="NCBI Taxonomy" id="186103"/>
    <lineage>
        <taxon>Bacteria</taxon>
        <taxon>Bacillati</taxon>
        <taxon>Bacillota</taxon>
        <taxon>Bacilli</taxon>
        <taxon>Lactobacillales</taxon>
        <taxon>Streptococcaceae</taxon>
        <taxon>Streptococcus</taxon>
    </lineage>
</organism>
<protein>
    <recommendedName>
        <fullName evidence="1">Putative competence-damage inducible protein</fullName>
    </recommendedName>
</protein>
<reference key="1">
    <citation type="journal article" date="2002" name="Proc. Natl. Acad. Sci. U.S.A.">
        <title>Genome sequence and comparative microarray analysis of serotype M18 group A Streptococcus strains associated with acute rheumatic fever outbreaks.</title>
        <authorList>
            <person name="Smoot J.C."/>
            <person name="Barbian K.D."/>
            <person name="Van Gompel J.J."/>
            <person name="Smoot L.M."/>
            <person name="Chaussee M.S."/>
            <person name="Sylva G.L."/>
            <person name="Sturdevant D.E."/>
            <person name="Ricklefs S.M."/>
            <person name="Porcella S.F."/>
            <person name="Parkins L.D."/>
            <person name="Beres S.B."/>
            <person name="Campbell D.S."/>
            <person name="Smith T.M."/>
            <person name="Zhang Q."/>
            <person name="Kapur V."/>
            <person name="Daly J.A."/>
            <person name="Veasy L.G."/>
            <person name="Musser J.M."/>
        </authorList>
    </citation>
    <scope>NUCLEOTIDE SEQUENCE [LARGE SCALE GENOMIC DNA]</scope>
    <source>
        <strain>MGAS8232</strain>
    </source>
</reference>